<feature type="chain" id="PRO_0000324396" description="Protein LOT5">
    <location>
        <begin position="1"/>
        <end position="252"/>
    </location>
</feature>
<accession>Q5AI58</accession>
<accession>A0A1D8PCY3</accession>
<keyword id="KW-0963">Cytoplasm</keyword>
<keyword id="KW-0539">Nucleus</keyword>
<keyword id="KW-1185">Reference proteome</keyword>
<gene>
    <name type="primary">LOT5</name>
    <name type="ordered locus">CAALFM_C103040WA</name>
    <name type="ORF">CaO19.10512</name>
    <name type="ORF">CaO19.2995</name>
</gene>
<organism>
    <name type="scientific">Candida albicans (strain SC5314 / ATCC MYA-2876)</name>
    <name type="common">Yeast</name>
    <dbReference type="NCBI Taxonomy" id="237561"/>
    <lineage>
        <taxon>Eukaryota</taxon>
        <taxon>Fungi</taxon>
        <taxon>Dikarya</taxon>
        <taxon>Ascomycota</taxon>
        <taxon>Saccharomycotina</taxon>
        <taxon>Pichiomycetes</taxon>
        <taxon>Debaryomycetaceae</taxon>
        <taxon>Candida/Lodderomyces clade</taxon>
        <taxon>Candida</taxon>
    </lineage>
</organism>
<sequence>MNQLVKLIHEQPNVENTIPHTLYQASSPKLNLAEEDKFIIYASGDKFSLSTNTDLSDLNPVSVSLFVLNTNFIVWFNRNNVGIEIAYPAIIFHGLNEDSIYLNIEDNQIIGTYITIRCNPESQNNQNPLFNIIDSKITNVYEAISYVSELHAVSSDDDYDEGEVTGIPALEISHTNSELESSVLNSLNNSGQADDLDDNMINDNDGIHNVAGMHVDVGFTSIAGVKTRRSEQEDYNGWTANLNSTNKRNKLH</sequence>
<reference key="1">
    <citation type="journal article" date="2004" name="Proc. Natl. Acad. Sci. U.S.A.">
        <title>The diploid genome sequence of Candida albicans.</title>
        <authorList>
            <person name="Jones T."/>
            <person name="Federspiel N.A."/>
            <person name="Chibana H."/>
            <person name="Dungan J."/>
            <person name="Kalman S."/>
            <person name="Magee B.B."/>
            <person name="Newport G."/>
            <person name="Thorstenson Y.R."/>
            <person name="Agabian N."/>
            <person name="Magee P.T."/>
            <person name="Davis R.W."/>
            <person name="Scherer S."/>
        </authorList>
    </citation>
    <scope>NUCLEOTIDE SEQUENCE [LARGE SCALE GENOMIC DNA]</scope>
    <source>
        <strain>SC5314 / ATCC MYA-2876</strain>
    </source>
</reference>
<reference key="2">
    <citation type="journal article" date="2007" name="Genome Biol.">
        <title>Assembly of the Candida albicans genome into sixteen supercontigs aligned on the eight chromosomes.</title>
        <authorList>
            <person name="van het Hoog M."/>
            <person name="Rast T.J."/>
            <person name="Martchenko M."/>
            <person name="Grindle S."/>
            <person name="Dignard D."/>
            <person name="Hogues H."/>
            <person name="Cuomo C."/>
            <person name="Berriman M."/>
            <person name="Scherer S."/>
            <person name="Magee B.B."/>
            <person name="Whiteway M."/>
            <person name="Chibana H."/>
            <person name="Nantel A."/>
            <person name="Magee P.T."/>
        </authorList>
    </citation>
    <scope>GENOME REANNOTATION</scope>
    <source>
        <strain>SC5314 / ATCC MYA-2876</strain>
    </source>
</reference>
<reference key="3">
    <citation type="journal article" date="2013" name="Genome Biol.">
        <title>Assembly of a phased diploid Candida albicans genome facilitates allele-specific measurements and provides a simple model for repeat and indel structure.</title>
        <authorList>
            <person name="Muzzey D."/>
            <person name="Schwartz K."/>
            <person name="Weissman J.S."/>
            <person name="Sherlock G."/>
        </authorList>
    </citation>
    <scope>NUCLEOTIDE SEQUENCE [LARGE SCALE GENOMIC DNA]</scope>
    <scope>GENOME REANNOTATION</scope>
    <source>
        <strain>SC5314 / ATCC MYA-2876</strain>
    </source>
</reference>
<dbReference type="EMBL" id="CP017623">
    <property type="protein sequence ID" value="AOW25985.1"/>
    <property type="molecule type" value="Genomic_DNA"/>
</dbReference>
<dbReference type="RefSeq" id="XP_721493.2">
    <property type="nucleotide sequence ID" value="XM_716400.2"/>
</dbReference>
<dbReference type="FunCoup" id="Q5AI58">
    <property type="interactions" value="43"/>
</dbReference>
<dbReference type="STRING" id="237561.Q5AI58"/>
<dbReference type="GeneID" id="3636842"/>
<dbReference type="KEGG" id="cal:CAALFM_C103040WA"/>
<dbReference type="eggNOG" id="ENOG502RY1I">
    <property type="taxonomic scope" value="Eukaryota"/>
</dbReference>
<dbReference type="HOGENOM" id="CLU_087379_0_0_1"/>
<dbReference type="InParanoid" id="Q5AI58"/>
<dbReference type="OrthoDB" id="19714at2759"/>
<dbReference type="PRO" id="PR:Q5AI58"/>
<dbReference type="Proteomes" id="UP000000559">
    <property type="component" value="Chromosome 1"/>
</dbReference>
<dbReference type="GO" id="GO:0005737">
    <property type="term" value="C:cytoplasm"/>
    <property type="evidence" value="ECO:0007669"/>
    <property type="project" value="UniProtKB-SubCell"/>
</dbReference>
<dbReference type="GO" id="GO:0005634">
    <property type="term" value="C:nucleus"/>
    <property type="evidence" value="ECO:0007669"/>
    <property type="project" value="UniProtKB-SubCell"/>
</dbReference>
<dbReference type="Gene3D" id="2.30.29.30">
    <property type="entry name" value="Pleckstrin-homology domain (PH domain)/Phosphotyrosine-binding domain (PTB)"/>
    <property type="match status" value="1"/>
</dbReference>
<dbReference type="InterPro" id="IPR011993">
    <property type="entry name" value="PH-like_dom_sf"/>
</dbReference>
<comment type="subcellular location">
    <subcellularLocation>
        <location evidence="1">Cytoplasm</location>
    </subcellularLocation>
    <subcellularLocation>
        <location evidence="1">Nucleus</location>
    </subcellularLocation>
</comment>
<comment type="similarity">
    <text evidence="2">Belongs to the LOT5 family.</text>
</comment>
<protein>
    <recommendedName>
        <fullName>Protein LOT5</fullName>
    </recommendedName>
</protein>
<name>LOT5_CANAL</name>
<evidence type="ECO:0000250" key="1"/>
<evidence type="ECO:0000305" key="2"/>
<proteinExistence type="inferred from homology"/>